<comment type="function">
    <text evidence="1">Part of the ABC transporter complex LolCDE involved in the translocation of mature outer membrane-directed lipoproteins, from the inner membrane to the periplasmic chaperone, LolA. Responsible for the formation of the LolA-lipoprotein complex in an ATP-dependent manner.</text>
</comment>
<comment type="subunit">
    <text evidence="1">The complex is composed of two ATP-binding proteins (LolD) and two transmembrane proteins (LolC and LolE).</text>
</comment>
<comment type="subcellular location">
    <subcellularLocation>
        <location evidence="1">Cell inner membrane</location>
        <topology evidence="1">Peripheral membrane protein</topology>
    </subcellularLocation>
</comment>
<comment type="similarity">
    <text evidence="1">Belongs to the ABC transporter superfamily. Lipoprotein translocase (TC 3.A.1.125) family.</text>
</comment>
<protein>
    <recommendedName>
        <fullName evidence="1">Lipoprotein-releasing system ATP-binding protein LolD</fullName>
        <ecNumber evidence="1">7.6.2.-</ecNumber>
    </recommendedName>
</protein>
<accession>Q1QCN2</accession>
<organism>
    <name type="scientific">Psychrobacter cryohalolentis (strain ATCC BAA-1226 / DSM 17306 / VKM B-2378 / K5)</name>
    <dbReference type="NCBI Taxonomy" id="335284"/>
    <lineage>
        <taxon>Bacteria</taxon>
        <taxon>Pseudomonadati</taxon>
        <taxon>Pseudomonadota</taxon>
        <taxon>Gammaproteobacteria</taxon>
        <taxon>Moraxellales</taxon>
        <taxon>Moraxellaceae</taxon>
        <taxon>Psychrobacter</taxon>
    </lineage>
</organism>
<dbReference type="EC" id="7.6.2.-" evidence="1"/>
<dbReference type="EMBL" id="CP000323">
    <property type="protein sequence ID" value="ABE74571.1"/>
    <property type="molecule type" value="Genomic_DNA"/>
</dbReference>
<dbReference type="RefSeq" id="WP_011513135.1">
    <property type="nucleotide sequence ID" value="NC_007969.1"/>
</dbReference>
<dbReference type="SMR" id="Q1QCN2"/>
<dbReference type="STRING" id="335284.Pcryo_0788"/>
<dbReference type="KEGG" id="pcr:Pcryo_0788"/>
<dbReference type="eggNOG" id="COG1136">
    <property type="taxonomic scope" value="Bacteria"/>
</dbReference>
<dbReference type="HOGENOM" id="CLU_000604_1_22_6"/>
<dbReference type="Proteomes" id="UP000002425">
    <property type="component" value="Chromosome"/>
</dbReference>
<dbReference type="GO" id="GO:0005886">
    <property type="term" value="C:plasma membrane"/>
    <property type="evidence" value="ECO:0007669"/>
    <property type="project" value="UniProtKB-SubCell"/>
</dbReference>
<dbReference type="GO" id="GO:0005524">
    <property type="term" value="F:ATP binding"/>
    <property type="evidence" value="ECO:0007669"/>
    <property type="project" value="UniProtKB-KW"/>
</dbReference>
<dbReference type="GO" id="GO:0016887">
    <property type="term" value="F:ATP hydrolysis activity"/>
    <property type="evidence" value="ECO:0007669"/>
    <property type="project" value="InterPro"/>
</dbReference>
<dbReference type="GO" id="GO:0022857">
    <property type="term" value="F:transmembrane transporter activity"/>
    <property type="evidence" value="ECO:0007669"/>
    <property type="project" value="TreeGrafter"/>
</dbReference>
<dbReference type="GO" id="GO:0044874">
    <property type="term" value="P:lipoprotein localization to outer membrane"/>
    <property type="evidence" value="ECO:0007669"/>
    <property type="project" value="TreeGrafter"/>
</dbReference>
<dbReference type="GO" id="GO:0089705">
    <property type="term" value="P:protein localization to outer membrane"/>
    <property type="evidence" value="ECO:0007669"/>
    <property type="project" value="TreeGrafter"/>
</dbReference>
<dbReference type="CDD" id="cd03255">
    <property type="entry name" value="ABC_MJ0796_LolCDE_FtsE"/>
    <property type="match status" value="1"/>
</dbReference>
<dbReference type="FunFam" id="3.40.50.300:FF:000230">
    <property type="entry name" value="Lipoprotein-releasing system ATP-binding protein LolD"/>
    <property type="match status" value="1"/>
</dbReference>
<dbReference type="Gene3D" id="3.40.50.300">
    <property type="entry name" value="P-loop containing nucleotide triphosphate hydrolases"/>
    <property type="match status" value="1"/>
</dbReference>
<dbReference type="InterPro" id="IPR003593">
    <property type="entry name" value="AAA+_ATPase"/>
</dbReference>
<dbReference type="InterPro" id="IPR003439">
    <property type="entry name" value="ABC_transporter-like_ATP-bd"/>
</dbReference>
<dbReference type="InterPro" id="IPR017871">
    <property type="entry name" value="ABC_transporter-like_CS"/>
</dbReference>
<dbReference type="InterPro" id="IPR015854">
    <property type="entry name" value="ABC_transpr_LolD-like"/>
</dbReference>
<dbReference type="InterPro" id="IPR011924">
    <property type="entry name" value="LolD_lipo_ATP-bd"/>
</dbReference>
<dbReference type="InterPro" id="IPR017911">
    <property type="entry name" value="MacB-like_ATP-bd"/>
</dbReference>
<dbReference type="InterPro" id="IPR027417">
    <property type="entry name" value="P-loop_NTPase"/>
</dbReference>
<dbReference type="NCBIfam" id="TIGR02211">
    <property type="entry name" value="LolD_lipo_ex"/>
    <property type="match status" value="1"/>
</dbReference>
<dbReference type="PANTHER" id="PTHR24220">
    <property type="entry name" value="IMPORT ATP-BINDING PROTEIN"/>
    <property type="match status" value="1"/>
</dbReference>
<dbReference type="PANTHER" id="PTHR24220:SF689">
    <property type="entry name" value="LIPOPROTEIN-RELEASING SYSTEM ATP-BINDING PROTEIN LOLD"/>
    <property type="match status" value="1"/>
</dbReference>
<dbReference type="Pfam" id="PF00005">
    <property type="entry name" value="ABC_tran"/>
    <property type="match status" value="1"/>
</dbReference>
<dbReference type="SMART" id="SM00382">
    <property type="entry name" value="AAA"/>
    <property type="match status" value="1"/>
</dbReference>
<dbReference type="SUPFAM" id="SSF52540">
    <property type="entry name" value="P-loop containing nucleoside triphosphate hydrolases"/>
    <property type="match status" value="1"/>
</dbReference>
<dbReference type="PROSITE" id="PS00211">
    <property type="entry name" value="ABC_TRANSPORTER_1"/>
    <property type="match status" value="1"/>
</dbReference>
<dbReference type="PROSITE" id="PS50893">
    <property type="entry name" value="ABC_TRANSPORTER_2"/>
    <property type="match status" value="1"/>
</dbReference>
<dbReference type="PROSITE" id="PS51244">
    <property type="entry name" value="LOLD"/>
    <property type="match status" value="1"/>
</dbReference>
<gene>
    <name evidence="1" type="primary">lolD</name>
    <name type="ordered locus">Pcryo_0788</name>
</gene>
<name>LOLD_PSYCK</name>
<evidence type="ECO:0000255" key="1">
    <source>
        <dbReference type="HAMAP-Rule" id="MF_01708"/>
    </source>
</evidence>
<reference key="1">
    <citation type="submission" date="2006-03" db="EMBL/GenBank/DDBJ databases">
        <title>Complete sequence of chromosome of Psychrobacter cryohalolentis K5.</title>
        <authorList>
            <consortium name="US DOE Joint Genome Institute"/>
            <person name="Copeland A."/>
            <person name="Lucas S."/>
            <person name="Lapidus A."/>
            <person name="Barry K."/>
            <person name="Detter J.C."/>
            <person name="Glavina T."/>
            <person name="Hammon N."/>
            <person name="Israni S."/>
            <person name="Dalin E."/>
            <person name="Tice H."/>
            <person name="Pitluck S."/>
            <person name="Brettin T."/>
            <person name="Bruce D."/>
            <person name="Han C."/>
            <person name="Tapia R."/>
            <person name="Sims D.R."/>
            <person name="Gilna P."/>
            <person name="Schmutz J."/>
            <person name="Larimer F."/>
            <person name="Land M."/>
            <person name="Hauser L."/>
            <person name="Kyrpides N."/>
            <person name="Kim E."/>
            <person name="Richardson P."/>
        </authorList>
    </citation>
    <scope>NUCLEOTIDE SEQUENCE [LARGE SCALE GENOMIC DNA]</scope>
    <source>
        <strain>ATCC BAA-1226 / DSM 17306 / VKM B-2378 / K5</strain>
    </source>
</reference>
<proteinExistence type="inferred from homology"/>
<sequence length="226" mass="24642">MSAILKATNINKIYDEGAVSTQVLTGLDLTVTAGERIAIVGTSGSGKSTLLHLLGGLDTPTSGEVWLHGQLLNSMNETERGAMRNKHLGFIYQFHHLLAEFTAIENVAMPLLMRPEVSTAEARQQAIDILNSVGLEHRLAHRPGELSGGERQRVAIARALVTKPSLILADEPTGNLDYDNAQSVFGLLSELQSTMQTALLMVTHDRNLAALADRQLLLRNGHWENY</sequence>
<keyword id="KW-0067">ATP-binding</keyword>
<keyword id="KW-0997">Cell inner membrane</keyword>
<keyword id="KW-1003">Cell membrane</keyword>
<keyword id="KW-0472">Membrane</keyword>
<keyword id="KW-0547">Nucleotide-binding</keyword>
<keyword id="KW-1278">Translocase</keyword>
<keyword id="KW-0813">Transport</keyword>
<feature type="chain" id="PRO_0000272129" description="Lipoprotein-releasing system ATP-binding protein LolD">
    <location>
        <begin position="1"/>
        <end position="226"/>
    </location>
</feature>
<feature type="domain" description="ABC transporter" evidence="1">
    <location>
        <begin position="5"/>
        <end position="226"/>
    </location>
</feature>
<feature type="binding site" evidence="1">
    <location>
        <begin position="41"/>
        <end position="48"/>
    </location>
    <ligand>
        <name>ATP</name>
        <dbReference type="ChEBI" id="CHEBI:30616"/>
    </ligand>
</feature>